<accession>Q16DB5</accession>
<sequence>MPAPLNTFKKSLSEGETLFGCWMSIAESYTAEILGNAGFDWLLIDGEHSPNDVRSIRDQMIALKSSDSHPIIRVPVGETWIIKQMLDLGAQTILVPMVETAEQAQELVRACRYPPEGRRGVGYAVGRASGFGQIDNYGPTADAQTCLLVQVENKTGLYNLDAILAVDGVDGVFIGPADLSASLGYLGQTMHPDIQATILKTIKRISDSGKAAGILTTDDGMIQASLDAGARFVAVAMDIAMLLNTGKSIAAKWKQG</sequence>
<protein>
    <recommendedName>
        <fullName evidence="3">Hydroxypyruvate/pyruvate aldolase</fullName>
        <shortName evidence="3">HPA/PA aldolase</shortName>
        <ecNumber evidence="2">4.1.2.-</ecNumber>
    </recommendedName>
</protein>
<gene>
    <name evidence="5" type="ordered locus">RD1_0304</name>
</gene>
<dbReference type="EC" id="4.1.2.-" evidence="2"/>
<dbReference type="EMBL" id="CP000362">
    <property type="protein sequence ID" value="ABG30028.1"/>
    <property type="molecule type" value="Genomic_DNA"/>
</dbReference>
<dbReference type="RefSeq" id="WP_011566650.1">
    <property type="nucleotide sequence ID" value="NC_008209.1"/>
</dbReference>
<dbReference type="SMR" id="Q16DB5"/>
<dbReference type="STRING" id="375451.RD1_0304"/>
<dbReference type="KEGG" id="rde:RD1_0304"/>
<dbReference type="eggNOG" id="COG3836">
    <property type="taxonomic scope" value="Bacteria"/>
</dbReference>
<dbReference type="HOGENOM" id="CLU_059964_1_0_5"/>
<dbReference type="OrthoDB" id="9802624at2"/>
<dbReference type="Proteomes" id="UP000007029">
    <property type="component" value="Chromosome"/>
</dbReference>
<dbReference type="GO" id="GO:0005737">
    <property type="term" value="C:cytoplasm"/>
    <property type="evidence" value="ECO:0007669"/>
    <property type="project" value="TreeGrafter"/>
</dbReference>
<dbReference type="GO" id="GO:0016832">
    <property type="term" value="F:aldehyde-lyase activity"/>
    <property type="evidence" value="ECO:0007669"/>
    <property type="project" value="TreeGrafter"/>
</dbReference>
<dbReference type="GO" id="GO:0046872">
    <property type="term" value="F:metal ion binding"/>
    <property type="evidence" value="ECO:0007669"/>
    <property type="project" value="UniProtKB-KW"/>
</dbReference>
<dbReference type="FunFam" id="3.20.20.60:FF:000004">
    <property type="entry name" value="5-keto-4-deoxy-D-glucarate aldolase"/>
    <property type="match status" value="1"/>
</dbReference>
<dbReference type="Gene3D" id="3.20.20.60">
    <property type="entry name" value="Phosphoenolpyruvate-binding domains"/>
    <property type="match status" value="1"/>
</dbReference>
<dbReference type="InterPro" id="IPR005000">
    <property type="entry name" value="Aldolase/citrate-lyase_domain"/>
</dbReference>
<dbReference type="InterPro" id="IPR050251">
    <property type="entry name" value="HpcH-HpaI_aldolase"/>
</dbReference>
<dbReference type="InterPro" id="IPR015813">
    <property type="entry name" value="Pyrv/PenolPyrv_kinase-like_dom"/>
</dbReference>
<dbReference type="InterPro" id="IPR040442">
    <property type="entry name" value="Pyrv_kinase-like_dom_sf"/>
</dbReference>
<dbReference type="PANTHER" id="PTHR30502">
    <property type="entry name" value="2-KETO-3-DEOXY-L-RHAMNONATE ALDOLASE"/>
    <property type="match status" value="1"/>
</dbReference>
<dbReference type="PANTHER" id="PTHR30502:SF4">
    <property type="entry name" value="5-KETO-4-DEOXY-D-GLUCARATE ALDOLASE"/>
    <property type="match status" value="1"/>
</dbReference>
<dbReference type="Pfam" id="PF03328">
    <property type="entry name" value="HpcH_HpaI"/>
    <property type="match status" value="1"/>
</dbReference>
<dbReference type="SUPFAM" id="SSF51621">
    <property type="entry name" value="Phosphoenolpyruvate/pyruvate domain"/>
    <property type="match status" value="1"/>
</dbReference>
<reference key="1">
    <citation type="journal article" date="2007" name="J. Bacteriol.">
        <title>The complete genome sequence of Roseobacter denitrificans reveals a mixotrophic rather than photosynthetic metabolism.</title>
        <authorList>
            <person name="Swingley W.D."/>
            <person name="Sadekar S."/>
            <person name="Mastrian S.D."/>
            <person name="Matthies H.J."/>
            <person name="Hao J."/>
            <person name="Ramos H."/>
            <person name="Acharya C.R."/>
            <person name="Conrad A.L."/>
            <person name="Taylor H.L."/>
            <person name="Dejesa L.C."/>
            <person name="Shah M.K."/>
            <person name="O'Huallachain M.E."/>
            <person name="Lince M.T."/>
            <person name="Blankenship R.E."/>
            <person name="Beatty J.T."/>
            <person name="Touchman J.W."/>
        </authorList>
    </citation>
    <scope>NUCLEOTIDE SEQUENCE [LARGE SCALE GENOMIC DNA]</scope>
    <source>
        <strain>ATCC 33942 / OCh 114</strain>
    </source>
</reference>
<reference key="2">
    <citation type="journal article" date="2017" name="Green Chem.">
        <title>Expanding the reaction space of aldolases using hydroxypyruvate as a nucleophilic substrate.</title>
        <authorList>
            <person name="de Berardinis V."/>
            <person name="Guerard-Helaine C."/>
            <person name="Darii E."/>
            <person name="Bastard K."/>
            <person name="Helaine V."/>
            <person name="Mariage A."/>
            <person name="Petit J.-L."/>
            <person name="Poupard N."/>
            <person name="Sanchez-Moreno I."/>
            <person name="Stam M."/>
            <person name="Gefflaut T."/>
            <person name="Salanoubat M."/>
            <person name="Lemaire M."/>
        </authorList>
    </citation>
    <scope>FUNCTION</scope>
    <scope>CATALYTIC ACTIVITY</scope>
</reference>
<name>HPAAL_ROSDO</name>
<proteinExistence type="evidence at protein level"/>
<evidence type="ECO:0000250" key="1">
    <source>
        <dbReference type="UniProtKB" id="Q47098"/>
    </source>
</evidence>
<evidence type="ECO:0000269" key="2">
    <source ref="2"/>
</evidence>
<evidence type="ECO:0000303" key="3">
    <source ref="2"/>
</evidence>
<evidence type="ECO:0000305" key="4"/>
<evidence type="ECO:0000312" key="5">
    <source>
        <dbReference type="EMBL" id="ABG30028.1"/>
    </source>
</evidence>
<keyword id="KW-0456">Lyase</keyword>
<keyword id="KW-0479">Metal-binding</keyword>
<keyword id="KW-0670">Pyruvate</keyword>
<keyword id="KW-1185">Reference proteome</keyword>
<comment type="function">
    <text evidence="2">Aldolase which can catalyze in vitro the aldolisation reaction between hydroxypyruvate (HPA) or pyruvate (PA) and D-glyceraldehyde (D-GA) (Ref.2). The condensation of pyruvate and D-glyceraldehyde produces 2-dehydro-3-deoxy-L-galactonate as the major product (Ref.2). Has weak activity with hydroxypyruvate and D-glyceraldehyde (Ref.2).</text>
</comment>
<comment type="catalytic activity">
    <reaction evidence="2">
        <text>D-glyceraldehyde + pyruvate = 2-dehydro-3-deoxy-L-galactonate</text>
        <dbReference type="Rhea" id="RHEA:80055"/>
        <dbReference type="ChEBI" id="CHEBI:15361"/>
        <dbReference type="ChEBI" id="CHEBI:17378"/>
        <dbReference type="ChEBI" id="CHEBI:75545"/>
    </reaction>
</comment>
<comment type="cofactor">
    <cofactor evidence="1">
        <name>a divalent metal cation</name>
        <dbReference type="ChEBI" id="CHEBI:60240"/>
    </cofactor>
</comment>
<comment type="similarity">
    <text evidence="4">Belongs to the HpcH/HpaI aldolase family.</text>
</comment>
<feature type="chain" id="PRO_0000460957" description="Hydroxypyruvate/pyruvate aldolase">
    <location>
        <begin position="1"/>
        <end position="256"/>
    </location>
</feature>
<feature type="active site" description="Proton acceptor" evidence="1">
    <location>
        <position position="48"/>
    </location>
</feature>
<feature type="binding site" evidence="1">
    <location>
        <position position="152"/>
    </location>
    <ligand>
        <name>a divalent metal cation</name>
        <dbReference type="ChEBI" id="CHEBI:60240"/>
    </ligand>
</feature>
<feature type="binding site" evidence="1">
    <location>
        <position position="178"/>
    </location>
    <ligand>
        <name>a divalent metal cation</name>
        <dbReference type="ChEBI" id="CHEBI:60240"/>
    </ligand>
</feature>
<feature type="site" description="Transition state stabilizer" evidence="1">
    <location>
        <position position="73"/>
    </location>
</feature>
<feature type="site" description="Increases basicity of active site His" evidence="1">
    <location>
        <position position="87"/>
    </location>
</feature>
<organism>
    <name type="scientific">Roseobacter denitrificans (strain ATCC 33942 / OCh 114)</name>
    <name type="common">Erythrobacter sp. (strain OCh 114)</name>
    <name type="synonym">Roseobacter denitrificans</name>
    <dbReference type="NCBI Taxonomy" id="375451"/>
    <lineage>
        <taxon>Bacteria</taxon>
        <taxon>Pseudomonadati</taxon>
        <taxon>Pseudomonadota</taxon>
        <taxon>Alphaproteobacteria</taxon>
        <taxon>Rhodobacterales</taxon>
        <taxon>Roseobacteraceae</taxon>
        <taxon>Roseobacter</taxon>
    </lineage>
</organism>